<organism>
    <name type="scientific">Homo sapiens</name>
    <name type="common">Human</name>
    <dbReference type="NCBI Taxonomy" id="9606"/>
    <lineage>
        <taxon>Eukaryota</taxon>
        <taxon>Metazoa</taxon>
        <taxon>Chordata</taxon>
        <taxon>Craniata</taxon>
        <taxon>Vertebrata</taxon>
        <taxon>Euteleostomi</taxon>
        <taxon>Mammalia</taxon>
        <taxon>Eutheria</taxon>
        <taxon>Euarchontoglires</taxon>
        <taxon>Primates</taxon>
        <taxon>Haplorrhini</taxon>
        <taxon>Catarrhini</taxon>
        <taxon>Hominidae</taxon>
        <taxon>Homo</taxon>
    </lineage>
</organism>
<sequence length="268" mass="30387">MSWKMALQIPGGFWAAAVTVMLVMLSTPVAEARDFPKDFLVQFKGMCYFTNGTERVRGVARYIYNREEYGRFDSDVGEFQAVTELGRSIEDWNNYKDFLEQERAAVDKVCRHNYEAELRTTLQRQVEPTVTISPSRTEALNHHNLLVCSVTDFYPAQIKVRWFRNDQEETAGVVSTSLIRNGDWTFQILVMLEITPQRGDIYTCQVEHPSLQSPITVEWRAQSESAQSKMLSGIGGFVLGLIFLGLGLIIRHRGQKGPRGPPPAGLLH</sequence>
<protein>
    <recommendedName>
        <fullName>HLA class II histocompatibility antigen, DQ beta 2 chain</fullName>
    </recommendedName>
    <alternativeName>
        <fullName>HLA class II histocompatibility antigen, DX beta chain</fullName>
    </alternativeName>
    <alternativeName>
        <fullName>MHC class II antigen DQB2</fullName>
    </alternativeName>
</protein>
<accession>P05538</accession>
<accession>A6NIA5</accession>
<accession>Q29826</accession>
<accession>Q29870</accession>
<accession>Q29871</accession>
<accession>Q29872</accession>
<accession>Q29873</accession>
<accession>Q5SR06</accession>
<feature type="signal peptide">
    <location>
        <begin position="1"/>
        <end position="32"/>
    </location>
</feature>
<feature type="chain" id="PRO_0000018992" description="HLA class II histocompatibility antigen, DQ beta 2 chain">
    <location>
        <begin position="33"/>
        <end position="268"/>
    </location>
</feature>
<feature type="topological domain" description="Extracellular" evidence="1">
    <location>
        <begin position="33"/>
        <end position="229"/>
    </location>
</feature>
<feature type="transmembrane region" description="Helical" evidence="1">
    <location>
        <begin position="230"/>
        <end position="250"/>
    </location>
</feature>
<feature type="topological domain" description="Cytoplasmic" evidence="1">
    <location>
        <begin position="251"/>
        <end position="268"/>
    </location>
</feature>
<feature type="domain" description="Ig-like C1-type">
    <location>
        <begin position="128"/>
        <end position="216"/>
    </location>
</feature>
<feature type="region of interest" description="Beta-1">
    <location>
        <begin position="33"/>
        <end position="126"/>
    </location>
</feature>
<feature type="region of interest" description="Beta-2">
    <location>
        <begin position="127"/>
        <end position="229"/>
    </location>
</feature>
<feature type="glycosylation site" description="N-linked (GlcNAc...) asparagine" evidence="1">
    <location>
        <position position="51"/>
    </location>
</feature>
<feature type="disulfide bond" evidence="2">
    <location>
        <begin position="47"/>
        <end position="110"/>
    </location>
</feature>
<feature type="disulfide bond" evidence="2">
    <location>
        <begin position="148"/>
        <end position="204"/>
    </location>
</feature>
<feature type="splice variant" id="VSP_045914" description="In isoform 2." evidence="5">
    <location>
        <begin position="1"/>
        <end position="4"/>
    </location>
</feature>
<feature type="splice variant" id="VSP_045915" description="In isoform 2." evidence="5">
    <location>
        <begin position="221"/>
        <end position="257"/>
    </location>
</feature>
<feature type="sequence variant" id="VAR_069445" description="In dbSNP:rs1049110." evidence="3 4">
    <original>R</original>
    <variation>Q</variation>
    <location>
        <position position="161"/>
    </location>
</feature>
<feature type="sequence variant" id="VAR_069446" evidence="4">
    <original>S</original>
    <variation>G</variation>
    <location>
        <position position="232"/>
    </location>
</feature>
<feature type="sequence variant" id="VAR_069447" evidence="4">
    <original>I</original>
    <variation>V</variation>
    <location>
        <position position="234"/>
    </location>
</feature>
<feature type="sequence conflict" description="In Ref. 6; AAA52667/AAA52668/AAA52669/AAA52670." evidence="6" ref="6">
    <original>V</original>
    <variation>L</variation>
    <location>
        <position position="106"/>
    </location>
</feature>
<feature type="sequence conflict" description="In Ref. 2; CAA60790." evidence="6" ref="2">
    <original>LLH</original>
    <variation>HLL</variation>
    <location>
        <begin position="266"/>
        <end position="268"/>
    </location>
</feature>
<dbReference type="EMBL" id="M29614">
    <property type="status" value="NOT_ANNOTATED_CDS"/>
    <property type="molecule type" value="Genomic_DNA"/>
</dbReference>
<dbReference type="EMBL" id="M29615">
    <property type="status" value="NOT_ANNOTATED_CDS"/>
    <property type="molecule type" value="Genomic_DNA"/>
</dbReference>
<dbReference type="EMBL" id="X87344">
    <property type="protein sequence ID" value="CAA60790.1"/>
    <property type="status" value="ALT_INIT"/>
    <property type="molecule type" value="Genomic_DNA"/>
</dbReference>
<dbReference type="EMBL" id="AL671681">
    <property type="status" value="NOT_ANNOTATED_CDS"/>
    <property type="molecule type" value="Genomic_DNA"/>
</dbReference>
<dbReference type="EMBL" id="AL672104">
    <property type="status" value="NOT_ANNOTATED_CDS"/>
    <property type="molecule type" value="Genomic_DNA"/>
</dbReference>
<dbReference type="EMBL" id="AL713890">
    <property type="status" value="NOT_ANNOTATED_CDS"/>
    <property type="molecule type" value="Genomic_DNA"/>
</dbReference>
<dbReference type="EMBL" id="BX296564">
    <property type="status" value="NOT_ANNOTATED_CDS"/>
    <property type="molecule type" value="Genomic_DNA"/>
</dbReference>
<dbReference type="EMBL" id="CR936921">
    <property type="status" value="NOT_ANNOTATED_CDS"/>
    <property type="molecule type" value="Genomic_DNA"/>
</dbReference>
<dbReference type="EMBL" id="BC031995">
    <property type="status" value="NOT_ANNOTATED_CDS"/>
    <property type="molecule type" value="mRNA"/>
</dbReference>
<dbReference type="EMBL" id="M11136">
    <property type="status" value="NOT_ANNOTATED_CDS"/>
    <property type="molecule type" value="Genomic_DNA"/>
</dbReference>
<dbReference type="EMBL" id="M24920">
    <property type="protein sequence ID" value="AAA52667.1"/>
    <property type="molecule type" value="Genomic_DNA"/>
</dbReference>
<dbReference type="EMBL" id="M24921">
    <property type="protein sequence ID" value="AAA52668.1"/>
    <property type="molecule type" value="Genomic_DNA"/>
</dbReference>
<dbReference type="EMBL" id="M24922">
    <property type="protein sequence ID" value="AAA52669.1"/>
    <property type="molecule type" value="Genomic_DNA"/>
</dbReference>
<dbReference type="EMBL" id="M24923">
    <property type="protein sequence ID" value="AAA52670.1"/>
    <property type="molecule type" value="Genomic_DNA"/>
</dbReference>
<dbReference type="CCDS" id="CCDS56419.1">
    <molecule id="P05538-2"/>
</dbReference>
<dbReference type="PIR" id="D29312">
    <property type="entry name" value="D29312"/>
</dbReference>
<dbReference type="PIR" id="G35058">
    <property type="entry name" value="G35058"/>
</dbReference>
<dbReference type="RefSeq" id="NP_001185787.1">
    <molecule id="P05538-2"/>
    <property type="nucleotide sequence ID" value="NM_001198858.2"/>
</dbReference>
<dbReference type="SMR" id="P05538"/>
<dbReference type="BioGRID" id="109365">
    <property type="interactions" value="94"/>
</dbReference>
<dbReference type="FunCoup" id="P05538">
    <property type="interactions" value="65"/>
</dbReference>
<dbReference type="IntAct" id="P05538">
    <property type="interactions" value="6"/>
</dbReference>
<dbReference type="STRING" id="9606.ENSP00000396330"/>
<dbReference type="GlyCosmos" id="P05538">
    <property type="glycosylation" value="1 site, No reported glycans"/>
</dbReference>
<dbReference type="GlyGen" id="P05538">
    <property type="glycosylation" value="1 site, 1 N-linked glycan (1 site)"/>
</dbReference>
<dbReference type="iPTMnet" id="P05538"/>
<dbReference type="PhosphoSitePlus" id="P05538"/>
<dbReference type="BioMuta" id="HLA-DQB2"/>
<dbReference type="DMDM" id="122271"/>
<dbReference type="jPOST" id="P05538"/>
<dbReference type="MassIVE" id="P05538"/>
<dbReference type="PeptideAtlas" id="P05538"/>
<dbReference type="ProteomicsDB" id="51844">
    <molecule id="P05538-1"/>
</dbReference>
<dbReference type="ProteomicsDB" id="63828"/>
<dbReference type="Antibodypedia" id="53255">
    <property type="antibodies" value="127 antibodies from 21 providers"/>
</dbReference>
<dbReference type="DNASU" id="3120"/>
<dbReference type="Ensembl" id="ENST00000399661.4">
    <property type="protein sequence ID" value="ENSP00000382569.4"/>
    <property type="gene ID" value="ENSG00000196610.13"/>
</dbReference>
<dbReference type="Ensembl" id="ENST00000411527.5">
    <molecule id="P05538-2"/>
    <property type="protein sequence ID" value="ENSP00000390431.1"/>
    <property type="gene ID" value="ENSG00000232629.9"/>
</dbReference>
<dbReference type="Ensembl" id="ENST00000426733.5">
    <molecule id="P05538-2"/>
    <property type="protein sequence ID" value="ENSP00000393969.1"/>
    <property type="gene ID" value="ENSG00000226165.9"/>
</dbReference>
<dbReference type="Ensembl" id="ENST00000430849.6">
    <property type="protein sequence ID" value="ENSP00000389067.2"/>
    <property type="gene ID" value="ENSG00000228813.9"/>
</dbReference>
<dbReference type="Ensembl" id="ENST00000432486.6">
    <property type="protein sequence ID" value="ENSP00000410132.2"/>
    <property type="gene ID" value="ENSG00000228254.9"/>
</dbReference>
<dbReference type="Ensembl" id="ENST00000438757.1">
    <molecule id="P05538-2"/>
    <property type="protein sequence ID" value="ENSP00000408884.1"/>
    <property type="gene ID" value="ENSG00000224305.9"/>
</dbReference>
<dbReference type="Ensembl" id="ENST00000456529.1">
    <molecule id="P05538-2"/>
    <property type="protein sequence ID" value="ENSP00000399594.1"/>
    <property type="gene ID" value="ENSG00000230675.9"/>
</dbReference>
<dbReference type="Ensembl" id="ENST00000457432.6">
    <property type="protein sequence ID" value="ENSP00000396502.2"/>
    <property type="gene ID" value="ENSG00000229493.9"/>
</dbReference>
<dbReference type="GeneID" id="3120"/>
<dbReference type="KEGG" id="hsa:3120"/>
<dbReference type="UCSC" id="uc003oby.5">
    <molecule id="P05538-1"/>
    <property type="organism name" value="human"/>
</dbReference>
<dbReference type="AGR" id="HGNC:4945"/>
<dbReference type="CTD" id="3120"/>
<dbReference type="DisGeNET" id="3120"/>
<dbReference type="GeneCards" id="HLA-DQB2"/>
<dbReference type="HGNC" id="HGNC:4945">
    <property type="gene designation" value="HLA-DQB2"/>
</dbReference>
<dbReference type="HPA" id="ENSG00000232629">
    <property type="expression patterns" value="Tissue enhanced (skin)"/>
</dbReference>
<dbReference type="MIM" id="615161">
    <property type="type" value="gene"/>
</dbReference>
<dbReference type="neXtProt" id="NX_P05538"/>
<dbReference type="OpenTargets" id="ENSG00000232629"/>
<dbReference type="VEuPathDB" id="HostDB:ENSG00000232629"/>
<dbReference type="GeneTree" id="ENSGT00940000154723"/>
<dbReference type="InParanoid" id="P05538"/>
<dbReference type="OrthoDB" id="10043043at2759"/>
<dbReference type="PAN-GO" id="P05538">
    <property type="GO annotations" value="6 GO annotations based on evolutionary models"/>
</dbReference>
<dbReference type="PhylomeDB" id="P05538"/>
<dbReference type="TreeFam" id="TF336626"/>
<dbReference type="PathwayCommons" id="P05538"/>
<dbReference type="Reactome" id="R-HSA-202424">
    <property type="pathway name" value="Downstream TCR signaling"/>
</dbReference>
<dbReference type="Reactome" id="R-HSA-202427">
    <property type="pathway name" value="Phosphorylation of CD3 and TCR zeta chains"/>
</dbReference>
<dbReference type="Reactome" id="R-HSA-202430">
    <property type="pathway name" value="Translocation of ZAP-70 to Immunological synapse"/>
</dbReference>
<dbReference type="Reactome" id="R-HSA-202433">
    <property type="pathway name" value="Generation of second messenger molecules"/>
</dbReference>
<dbReference type="Reactome" id="R-HSA-2132295">
    <property type="pathway name" value="MHC class II antigen presentation"/>
</dbReference>
<dbReference type="Reactome" id="R-HSA-389948">
    <property type="pathway name" value="Co-inhibition by PD-1"/>
</dbReference>
<dbReference type="Reactome" id="R-HSA-877300">
    <property type="pathway name" value="Interferon gamma signaling"/>
</dbReference>
<dbReference type="SignaLink" id="P05538"/>
<dbReference type="SIGNOR" id="P05538"/>
<dbReference type="BioGRID-ORCS" id="3120">
    <property type="hits" value="9 hits in 1111 CRISPR screens"/>
</dbReference>
<dbReference type="ChiTaRS" id="HLA-DQB2">
    <property type="organism name" value="human"/>
</dbReference>
<dbReference type="GeneWiki" id="HLA-DQB2"/>
<dbReference type="GenomeRNAi" id="3120"/>
<dbReference type="Pharos" id="P05538">
    <property type="development level" value="Tbio"/>
</dbReference>
<dbReference type="PRO" id="PR:P05538"/>
<dbReference type="Proteomes" id="UP000005640">
    <property type="component" value="Chromosome 6"/>
</dbReference>
<dbReference type="RNAct" id="P05538">
    <property type="molecule type" value="protein"/>
</dbReference>
<dbReference type="Bgee" id="ENSG00000232629">
    <property type="expression patterns" value="Expressed in lymph node and 96 other cell types or tissues"/>
</dbReference>
<dbReference type="ExpressionAtlas" id="P05538">
    <property type="expression patterns" value="baseline and differential"/>
</dbReference>
<dbReference type="GO" id="GO:0030669">
    <property type="term" value="C:clathrin-coated endocytic vesicle membrane"/>
    <property type="evidence" value="ECO:0000304"/>
    <property type="project" value="Reactome"/>
</dbReference>
<dbReference type="GO" id="GO:0030666">
    <property type="term" value="C:endocytic vesicle membrane"/>
    <property type="evidence" value="ECO:0000304"/>
    <property type="project" value="Reactome"/>
</dbReference>
<dbReference type="GO" id="GO:0012507">
    <property type="term" value="C:ER to Golgi transport vesicle membrane"/>
    <property type="evidence" value="ECO:0000304"/>
    <property type="project" value="Reactome"/>
</dbReference>
<dbReference type="GO" id="GO:0000139">
    <property type="term" value="C:Golgi membrane"/>
    <property type="evidence" value="ECO:0000304"/>
    <property type="project" value="Reactome"/>
</dbReference>
<dbReference type="GO" id="GO:0031902">
    <property type="term" value="C:late endosome membrane"/>
    <property type="evidence" value="ECO:0000318"/>
    <property type="project" value="GO_Central"/>
</dbReference>
<dbReference type="GO" id="GO:0098553">
    <property type="term" value="C:lumenal side of endoplasmic reticulum membrane"/>
    <property type="evidence" value="ECO:0000304"/>
    <property type="project" value="Reactome"/>
</dbReference>
<dbReference type="GO" id="GO:0005765">
    <property type="term" value="C:lysosomal membrane"/>
    <property type="evidence" value="ECO:0000318"/>
    <property type="project" value="GO_Central"/>
</dbReference>
<dbReference type="GO" id="GO:0042613">
    <property type="term" value="C:MHC class II protein complex"/>
    <property type="evidence" value="ECO:0000318"/>
    <property type="project" value="GO_Central"/>
</dbReference>
<dbReference type="GO" id="GO:0005886">
    <property type="term" value="C:plasma membrane"/>
    <property type="evidence" value="ECO:0000304"/>
    <property type="project" value="Reactome"/>
</dbReference>
<dbReference type="GO" id="GO:0032588">
    <property type="term" value="C:trans-Golgi network membrane"/>
    <property type="evidence" value="ECO:0000304"/>
    <property type="project" value="Reactome"/>
</dbReference>
<dbReference type="GO" id="GO:0030658">
    <property type="term" value="C:transport vesicle membrane"/>
    <property type="evidence" value="ECO:0000304"/>
    <property type="project" value="Reactome"/>
</dbReference>
<dbReference type="GO" id="GO:0023026">
    <property type="term" value="F:MHC class II protein complex binding"/>
    <property type="evidence" value="ECO:0000318"/>
    <property type="project" value="GO_Central"/>
</dbReference>
<dbReference type="GO" id="GO:0032395">
    <property type="term" value="F:MHC class II receptor activity"/>
    <property type="evidence" value="ECO:0000303"/>
    <property type="project" value="UniProtKB"/>
</dbReference>
<dbReference type="GO" id="GO:0042605">
    <property type="term" value="F:peptide antigen binding"/>
    <property type="evidence" value="ECO:0000318"/>
    <property type="project" value="GO_Central"/>
</dbReference>
<dbReference type="GO" id="GO:0002250">
    <property type="term" value="P:adaptive immune response"/>
    <property type="evidence" value="ECO:0007669"/>
    <property type="project" value="UniProtKB-KW"/>
</dbReference>
<dbReference type="GO" id="GO:0019886">
    <property type="term" value="P:antigen processing and presentation of exogenous peptide antigen via MHC class II"/>
    <property type="evidence" value="ECO:0000318"/>
    <property type="project" value="GO_Central"/>
</dbReference>
<dbReference type="GO" id="GO:0006955">
    <property type="term" value="P:immune response"/>
    <property type="evidence" value="ECO:0000303"/>
    <property type="project" value="UniProtKB"/>
</dbReference>
<dbReference type="GO" id="GO:0002503">
    <property type="term" value="P:peptide antigen assembly with MHC class II protein complex"/>
    <property type="evidence" value="ECO:0000318"/>
    <property type="project" value="GO_Central"/>
</dbReference>
<dbReference type="GO" id="GO:0050778">
    <property type="term" value="P:positive regulation of immune response"/>
    <property type="evidence" value="ECO:0000318"/>
    <property type="project" value="GO_Central"/>
</dbReference>
<dbReference type="GO" id="GO:0050870">
    <property type="term" value="P:positive regulation of T cell activation"/>
    <property type="evidence" value="ECO:0000318"/>
    <property type="project" value="GO_Central"/>
</dbReference>
<dbReference type="CDD" id="cd21001">
    <property type="entry name" value="IgC1_MHC_II_beta_HLA-DQ_I-A"/>
    <property type="match status" value="1"/>
</dbReference>
<dbReference type="FunFam" id="2.60.40.10:FF:000116">
    <property type="entry name" value="HLA class II histocompatibility antigen, DRB1-1 beta chain"/>
    <property type="match status" value="1"/>
</dbReference>
<dbReference type="FunFam" id="3.10.320.10:FF:000001">
    <property type="entry name" value="HLA class II histocompatibility antigen, DRB1-1 beta chain"/>
    <property type="match status" value="1"/>
</dbReference>
<dbReference type="Gene3D" id="3.10.320.10">
    <property type="entry name" value="Class II Histocompatibility Antigen, M Beta Chain, Chain B, domain 1"/>
    <property type="match status" value="1"/>
</dbReference>
<dbReference type="Gene3D" id="2.60.40.10">
    <property type="entry name" value="Immunoglobulins"/>
    <property type="match status" value="1"/>
</dbReference>
<dbReference type="InterPro" id="IPR007110">
    <property type="entry name" value="Ig-like_dom"/>
</dbReference>
<dbReference type="InterPro" id="IPR036179">
    <property type="entry name" value="Ig-like_dom_sf"/>
</dbReference>
<dbReference type="InterPro" id="IPR013783">
    <property type="entry name" value="Ig-like_fold"/>
</dbReference>
<dbReference type="InterPro" id="IPR003006">
    <property type="entry name" value="Ig/MHC_CS"/>
</dbReference>
<dbReference type="InterPro" id="IPR003597">
    <property type="entry name" value="Ig_C1-set"/>
</dbReference>
<dbReference type="InterPro" id="IPR050160">
    <property type="entry name" value="MHC/Immunoglobulin"/>
</dbReference>
<dbReference type="InterPro" id="IPR011162">
    <property type="entry name" value="MHC_I/II-like_Ag-recog"/>
</dbReference>
<dbReference type="InterPro" id="IPR014745">
    <property type="entry name" value="MHC_II_a/b_N"/>
</dbReference>
<dbReference type="InterPro" id="IPR000353">
    <property type="entry name" value="MHC_II_b_N"/>
</dbReference>
<dbReference type="PANTHER" id="PTHR19944:SF68">
    <property type="entry name" value="HLA CLASS II HISTOCOMPATIBILITY ANTIGEN, DQ BETA 2 CHAIN"/>
    <property type="match status" value="1"/>
</dbReference>
<dbReference type="PANTHER" id="PTHR19944">
    <property type="entry name" value="MHC CLASS II-RELATED"/>
    <property type="match status" value="1"/>
</dbReference>
<dbReference type="Pfam" id="PF07654">
    <property type="entry name" value="C1-set"/>
    <property type="match status" value="1"/>
</dbReference>
<dbReference type="Pfam" id="PF00969">
    <property type="entry name" value="MHC_II_beta"/>
    <property type="match status" value="1"/>
</dbReference>
<dbReference type="SMART" id="SM00407">
    <property type="entry name" value="IGc1"/>
    <property type="match status" value="1"/>
</dbReference>
<dbReference type="SMART" id="SM00921">
    <property type="entry name" value="MHC_II_beta"/>
    <property type="match status" value="1"/>
</dbReference>
<dbReference type="SUPFAM" id="SSF48726">
    <property type="entry name" value="Immunoglobulin"/>
    <property type="match status" value="1"/>
</dbReference>
<dbReference type="SUPFAM" id="SSF54452">
    <property type="entry name" value="MHC antigen-recognition domain"/>
    <property type="match status" value="1"/>
</dbReference>
<dbReference type="PROSITE" id="PS50835">
    <property type="entry name" value="IG_LIKE"/>
    <property type="match status" value="1"/>
</dbReference>
<dbReference type="PROSITE" id="PS00290">
    <property type="entry name" value="IG_MHC"/>
    <property type="match status" value="1"/>
</dbReference>
<evidence type="ECO:0000255" key="1"/>
<evidence type="ECO:0000255" key="2">
    <source>
        <dbReference type="PROSITE-ProRule" id="PRU00114"/>
    </source>
</evidence>
<evidence type="ECO:0000269" key="3">
    <source>
    </source>
</evidence>
<evidence type="ECO:0000269" key="4">
    <source>
    </source>
</evidence>
<evidence type="ECO:0000303" key="5">
    <source>
    </source>
</evidence>
<evidence type="ECO:0000305" key="6"/>
<keyword id="KW-1064">Adaptive immunity</keyword>
<keyword id="KW-0025">Alternative splicing</keyword>
<keyword id="KW-1003">Cell membrane</keyword>
<keyword id="KW-1015">Disulfide bond</keyword>
<keyword id="KW-0256">Endoplasmic reticulum</keyword>
<keyword id="KW-0967">Endosome</keyword>
<keyword id="KW-0325">Glycoprotein</keyword>
<keyword id="KW-0333">Golgi apparatus</keyword>
<keyword id="KW-0391">Immunity</keyword>
<keyword id="KW-0458">Lysosome</keyword>
<keyword id="KW-0472">Membrane</keyword>
<keyword id="KW-0491">MHC II</keyword>
<keyword id="KW-1267">Proteomics identification</keyword>
<keyword id="KW-1185">Reference proteome</keyword>
<keyword id="KW-0732">Signal</keyword>
<keyword id="KW-0812">Transmembrane</keyword>
<keyword id="KW-1133">Transmembrane helix</keyword>
<comment type="function">
    <text evidence="4">Binds peptides derived from antigens that access the endocytic route of antigen presenting cells (APC) and presents them on the cell surface for recognition by the CD4 T-cells. The peptide binding cleft accommodates peptides of 10-30 residues. The peptides presented by MHC class II molecules are generated mostly by degradation of proteins that access the endocytic route, where they are processed by lysosomal proteases and other hydrolases. Exogenous antigens that have been endocytosed by the APC are thus readily available for presentation via MHC II molecules, and for this reason this antigen presentation pathway is usually referred to as exogenous. As membrane proteins on their way to degradation in lysosomes as part of their normal turn-over are also contained in the endosomal/lysosomal compartments, exogenous antigens must compete with those derived from endogenous components. Autophagy is also a source of endogenous peptides, autophagosomes constitutively fuse with MHC class II loading compartments. In addition to APCs, other cells of the gastrointestinal tract, such as epithelial cells, express MHC class II molecules and CD74 and act as APCs, which is an unusual trait of the GI tract. To produce a MHC class II molecule that presents an antigen, three MHC class II molecules (heterodimers of an alpha and a beta chain) associate with a CD74 trimer in the ER to form a heterononamer. Soon after the entry of this complex into the endosomal/lysosomal system where antigen processing occurs, CD74 undergoes a sequential degradation by various proteases, including CTSS and CTSL, leaving a small fragment termed CLIP (class-II-associated invariant chain peptide). The removal of CLIP is facilitated by HLA-DM via direct binding to the alpha-beta-CLIP complex so that CLIP is released. HLA-DM stabilizes MHC class II molecules until primary high affinity antigenic peptides are bound. The MHC II molecule bound to a peptide is then transported to the cell membrane surface. In B-cells, the interaction between HLA-DM and MHC class II molecules is regulated by HLA-DO. Primary dendritic cells (DCs) also to express HLA-DO. Lysosomal microenvironment has been implicated in the regulation of antigen loading into MHC II molecules, increased acidification produces increased proteolysis and efficient peptide loading.</text>
</comment>
<comment type="subunit">
    <text evidence="4">Heterodimer of an alpha and a beta subunit; also referred as MHC class II molecule. Dimer formation with HLA-DQA2, but not with HLA-DQA1, is required for efficient exit from the endoplasmic reticulum (ER). In the ER, forms a heterononamer; 3 MHC class II molecules bind to a CD74 homotrimer (also known as invariant chain or HLA class II histocompatibility antigen gamma chain). In the endosomal/lysosomal system; CD74 undergoes sequential degradation by various proteases; leaving a small fragment termed CLIP on each MHC class II molecule. MHC class II molecule interacts with HLA_DM, and HLA_DO in B-cells, in order to release CLIP and facilitate the binding of antigenic peptides. Association with HLA-DMA also occurs in skin Langerhans cells, in post-Golgi compartments.</text>
</comment>
<comment type="subcellular location">
    <subcellularLocation>
        <location evidence="4">Cell membrane</location>
        <topology evidence="4">Single-pass type I membrane protein</topology>
    </subcellularLocation>
    <subcellularLocation>
        <location evidence="4">Endoplasmic reticulum membrane</location>
        <topology evidence="4">Single-pass type I membrane protein</topology>
    </subcellularLocation>
    <subcellularLocation>
        <location evidence="4">Golgi apparatus</location>
        <location evidence="4">trans-Golgi network membrane</location>
        <topology evidence="4">Single-pass type I membrane protein</topology>
    </subcellularLocation>
    <subcellularLocation>
        <location evidence="4">Endosome membrane</location>
        <topology evidence="4">Single-pass type I membrane protein</topology>
    </subcellularLocation>
    <subcellularLocation>
        <location evidence="4">Lysosome membrane</location>
        <topology evidence="4">Single-pass type I membrane protein</topology>
    </subcellularLocation>
    <text>The MHC class II complex transits through a number of intracellular compartments in the endocytic pathway until it reaches the cell membrane for antigen presentation.</text>
</comment>
<comment type="alternative products">
    <event type="alternative splicing"/>
    <isoform>
        <id>P05538-1</id>
        <name>1</name>
        <sequence type="displayed"/>
    </isoform>
    <isoform>
        <id>P05538-2</id>
        <name>2</name>
        <sequence type="described" ref="VSP_045914 VSP_045915"/>
    </isoform>
</comment>
<comment type="tissue specificity">
    <text evidence="4">Restricted to skin Langerhans cells (at protein level).</text>
</comment>
<comment type="similarity">
    <text evidence="6">Belongs to the MHC class II family.</text>
</comment>
<comment type="sequence caution" evidence="6">
    <conflict type="erroneous initiation">
        <sequence resource="EMBL-CDS" id="CAA60790"/>
    </conflict>
    <text>Truncated N-terminus.</text>
</comment>
<reference key="1">
    <citation type="journal article" date="1987" name="J. Biol. Chem.">
        <title>Class II genes of the human major histocompatibility complex. Comparisons of the DQ and DX alpha and beta genes.</title>
        <authorList>
            <person name="Jonsson A.-K."/>
            <person name="Hyldig-Nielsen J.-J."/>
            <person name="Servenius B."/>
            <person name="Larhammar D."/>
            <person name="Andersson G."/>
            <person name="Joergensen F."/>
            <person name="Peterson P.A."/>
            <person name="Rask L."/>
        </authorList>
    </citation>
    <scope>NUCLEOTIDE SEQUENCE [GENOMIC DNA]</scope>
</reference>
<reference key="2">
    <citation type="journal article" date="1996" name="J. Mol. Biol.">
        <title>Evolutionary dynamics of non-coding sequences within the class II region of the human MHC.</title>
        <authorList>
            <person name="Beck S."/>
            <person name="Abdulla S."/>
            <person name="Alderton R.P."/>
            <person name="Glynne R.J."/>
            <person name="Gut I.G."/>
            <person name="Hosking L.K."/>
            <person name="Jackson A."/>
            <person name="Kelly A."/>
            <person name="Newell W.R."/>
            <person name="Sanseau P."/>
            <person name="Radley E."/>
            <person name="Thorpe K.L."/>
            <person name="Trowsdale J."/>
        </authorList>
    </citation>
    <scope>NUCLEOTIDE SEQUENCE [GENOMIC DNA]</scope>
</reference>
<reference key="3">
    <citation type="journal article" date="2003" name="Nature">
        <title>The DNA sequence and analysis of human chromosome 6.</title>
        <authorList>
            <person name="Mungall A.J."/>
            <person name="Palmer S.A."/>
            <person name="Sims S.K."/>
            <person name="Edwards C.A."/>
            <person name="Ashurst J.L."/>
            <person name="Wilming L."/>
            <person name="Jones M.C."/>
            <person name="Horton R."/>
            <person name="Hunt S.E."/>
            <person name="Scott C.E."/>
            <person name="Gilbert J.G.R."/>
            <person name="Clamp M.E."/>
            <person name="Bethel G."/>
            <person name="Milne S."/>
            <person name="Ainscough R."/>
            <person name="Almeida J.P."/>
            <person name="Ambrose K.D."/>
            <person name="Andrews T.D."/>
            <person name="Ashwell R.I.S."/>
            <person name="Babbage A.K."/>
            <person name="Bagguley C.L."/>
            <person name="Bailey J."/>
            <person name="Banerjee R."/>
            <person name="Barker D.J."/>
            <person name="Barlow K.F."/>
            <person name="Bates K."/>
            <person name="Beare D.M."/>
            <person name="Beasley H."/>
            <person name="Beasley O."/>
            <person name="Bird C.P."/>
            <person name="Blakey S.E."/>
            <person name="Bray-Allen S."/>
            <person name="Brook J."/>
            <person name="Brown A.J."/>
            <person name="Brown J.Y."/>
            <person name="Burford D.C."/>
            <person name="Burrill W."/>
            <person name="Burton J."/>
            <person name="Carder C."/>
            <person name="Carter N.P."/>
            <person name="Chapman J.C."/>
            <person name="Clark S.Y."/>
            <person name="Clark G."/>
            <person name="Clee C.M."/>
            <person name="Clegg S."/>
            <person name="Cobley V."/>
            <person name="Collier R.E."/>
            <person name="Collins J.E."/>
            <person name="Colman L.K."/>
            <person name="Corby N.R."/>
            <person name="Coville G.J."/>
            <person name="Culley K.M."/>
            <person name="Dhami P."/>
            <person name="Davies J."/>
            <person name="Dunn M."/>
            <person name="Earthrowl M.E."/>
            <person name="Ellington A.E."/>
            <person name="Evans K.A."/>
            <person name="Faulkner L."/>
            <person name="Francis M.D."/>
            <person name="Frankish A."/>
            <person name="Frankland J."/>
            <person name="French L."/>
            <person name="Garner P."/>
            <person name="Garnett J."/>
            <person name="Ghori M.J."/>
            <person name="Gilby L.M."/>
            <person name="Gillson C.J."/>
            <person name="Glithero R.J."/>
            <person name="Grafham D.V."/>
            <person name="Grant M."/>
            <person name="Gribble S."/>
            <person name="Griffiths C."/>
            <person name="Griffiths M.N.D."/>
            <person name="Hall R."/>
            <person name="Halls K.S."/>
            <person name="Hammond S."/>
            <person name="Harley J.L."/>
            <person name="Hart E.A."/>
            <person name="Heath P.D."/>
            <person name="Heathcott R."/>
            <person name="Holmes S.J."/>
            <person name="Howden P.J."/>
            <person name="Howe K.L."/>
            <person name="Howell G.R."/>
            <person name="Huckle E."/>
            <person name="Humphray S.J."/>
            <person name="Humphries M.D."/>
            <person name="Hunt A.R."/>
            <person name="Johnson C.M."/>
            <person name="Joy A.A."/>
            <person name="Kay M."/>
            <person name="Keenan S.J."/>
            <person name="Kimberley A.M."/>
            <person name="King A."/>
            <person name="Laird G.K."/>
            <person name="Langford C."/>
            <person name="Lawlor S."/>
            <person name="Leongamornlert D.A."/>
            <person name="Leversha M."/>
            <person name="Lloyd C.R."/>
            <person name="Lloyd D.M."/>
            <person name="Loveland J.E."/>
            <person name="Lovell J."/>
            <person name="Martin S."/>
            <person name="Mashreghi-Mohammadi M."/>
            <person name="Maslen G.L."/>
            <person name="Matthews L."/>
            <person name="McCann O.T."/>
            <person name="McLaren S.J."/>
            <person name="McLay K."/>
            <person name="McMurray A."/>
            <person name="Moore M.J.F."/>
            <person name="Mullikin J.C."/>
            <person name="Niblett D."/>
            <person name="Nickerson T."/>
            <person name="Novik K.L."/>
            <person name="Oliver K."/>
            <person name="Overton-Larty E.K."/>
            <person name="Parker A."/>
            <person name="Patel R."/>
            <person name="Pearce A.V."/>
            <person name="Peck A.I."/>
            <person name="Phillimore B.J.C.T."/>
            <person name="Phillips S."/>
            <person name="Plumb R.W."/>
            <person name="Porter K.M."/>
            <person name="Ramsey Y."/>
            <person name="Ranby S.A."/>
            <person name="Rice C.M."/>
            <person name="Ross M.T."/>
            <person name="Searle S.M."/>
            <person name="Sehra H.K."/>
            <person name="Sheridan E."/>
            <person name="Skuce C.D."/>
            <person name="Smith S."/>
            <person name="Smith M."/>
            <person name="Spraggon L."/>
            <person name="Squares S.L."/>
            <person name="Steward C.A."/>
            <person name="Sycamore N."/>
            <person name="Tamlyn-Hall G."/>
            <person name="Tester J."/>
            <person name="Theaker A.J."/>
            <person name="Thomas D.W."/>
            <person name="Thorpe A."/>
            <person name="Tracey A."/>
            <person name="Tromans A."/>
            <person name="Tubby B."/>
            <person name="Wall M."/>
            <person name="Wallis J.M."/>
            <person name="West A.P."/>
            <person name="White S.S."/>
            <person name="Whitehead S.L."/>
            <person name="Whittaker H."/>
            <person name="Wild A."/>
            <person name="Willey D.J."/>
            <person name="Wilmer T.E."/>
            <person name="Wood J.M."/>
            <person name="Wray P.W."/>
            <person name="Wyatt J.C."/>
            <person name="Young L."/>
            <person name="Younger R.M."/>
            <person name="Bentley D.R."/>
            <person name="Coulson A."/>
            <person name="Durbin R.M."/>
            <person name="Hubbard T."/>
            <person name="Sulston J.E."/>
            <person name="Dunham I."/>
            <person name="Rogers J."/>
            <person name="Beck S."/>
        </authorList>
    </citation>
    <scope>NUCLEOTIDE SEQUENCE [LARGE SCALE GENOMIC DNA]</scope>
</reference>
<reference key="4">
    <citation type="journal article" date="2004" name="Genome Res.">
        <title>The status, quality, and expansion of the NIH full-length cDNA project: the Mammalian Gene Collection (MGC).</title>
        <authorList>
            <consortium name="The MGC Project Team"/>
        </authorList>
    </citation>
    <scope>NUCLEOTIDE SEQUENCE [LARGE SCALE MRNA] (ISOFORM 2)</scope>
    <scope>VARIANT GLN-161</scope>
    <source>
        <tissue>Squamous cell carcinoma</tissue>
    </source>
</reference>
<reference key="5">
    <citation type="journal article" date="1985" name="Proc. Natl. Acad. Sci. U.S.A.">
        <title>Gene organization of DC and DX subregions of the human major histocompatibility complex.</title>
        <authorList>
            <person name="Okada K."/>
            <person name="Boss J.M."/>
            <person name="Prentice H."/>
            <person name="Spies T."/>
            <person name="Mengler R."/>
            <person name="Auffray C."/>
            <person name="Lillie J.W."/>
            <person name="Grossberger D."/>
            <person name="Strominger J.L."/>
        </authorList>
    </citation>
    <scope>NUCLEOTIDE SEQUENCE [GENOMIC DNA] OF 38-125</scope>
</reference>
<reference key="6">
    <citation type="journal article" date="1989" name="Immunogenetics">
        <title>Remarkable sequence conservation of the HLA-DQB2 locus (DX beta) within the highly polymorphic DQ subregion of the human MHC.</title>
        <authorList>
            <person name="Berdoz J."/>
            <person name="Tiercy J.-M."/>
            <person name="Rollini P."/>
            <person name="Mach B."/>
            <person name="Gorski J."/>
        </authorList>
    </citation>
    <scope>NUCLEOTIDE SEQUENCE [GENOMIC DNA] OF 38-125</scope>
</reference>
<reference key="7">
    <citation type="journal article" date="1997" name="J. Immunol.">
        <title>The nonpolymorphic MHC class II isotype, HLA-DQA2, is expressed on the surface of B lymphoblastoid cells.</title>
        <authorList>
            <person name="Rudy G.B."/>
            <person name="Lew A.M."/>
        </authorList>
    </citation>
    <scope>LACK OF EXPRESSION</scope>
</reference>
<reference key="8">
    <citation type="journal article" date="2001" name="Hum. Immunol.">
        <title>Absence of in vivo DNA-protein interactions in the DQA2 and DQB2 promoter regions.</title>
        <authorList>
            <person name="Indovina P."/>
            <person name="Megiorni F."/>
            <person name="Fontemaggi G."/>
            <person name="Coni P."/>
            <person name="Mora B."/>
            <person name="Mazzilli M.C."/>
        </authorList>
    </citation>
    <scope>LACK OF EXPRESSION</scope>
</reference>
<reference key="9">
    <citation type="journal article" date="1996" name="Cell">
        <title>Invariant chain structure and MHC class II function.</title>
        <authorList>
            <person name="Cresswell P."/>
        </authorList>
    </citation>
    <scope>REVIEW</scope>
</reference>
<reference key="10">
    <citation type="journal article" date="2001" name="Mol. Immunol.">
        <title>Presentation of antigens by MHC class II molecules: getting the most out of them.</title>
        <authorList>
            <person name="Villadangos J.A."/>
        </authorList>
    </citation>
    <scope>REVIEW</scope>
</reference>
<reference key="11">
    <citation type="journal article" date="2008" name="EMBO J.">
        <title>MHC class II molecules on the move for successful antigen presentation.</title>
        <authorList>
            <person name="Rocha N."/>
            <person name="Neefjes J."/>
        </authorList>
    </citation>
    <scope>REVIEW</scope>
</reference>
<reference key="12">
    <citation type="journal article" date="2007" name="Immunity">
        <title>Autophagy in MHC class II presentation: sampling from within.</title>
        <authorList>
            <person name="Menendez-Benito V."/>
            <person name="Neefjes J."/>
        </authorList>
    </citation>
    <scope>REVIEW</scope>
</reference>
<reference key="13">
    <citation type="journal article" date="2009" name="J. Cell Sci.">
        <title>MHC class II transport at a glance.</title>
        <authorList>
            <person name="Berger A.C."/>
            <person name="Roche P.A."/>
        </authorList>
    </citation>
    <scope>REVIEW</scope>
</reference>
<reference key="14">
    <citation type="journal article" date="2009" name="World J. Gastroenterol.">
        <title>CD74 in antigen presentation, inflammation, and cancers of the gastrointestinal tract.</title>
        <authorList>
            <person name="Beswick E.J."/>
            <person name="Reyes V.E."/>
        </authorList>
    </citation>
    <scope>REVIEW</scope>
</reference>
<reference key="15">
    <citation type="journal article" date="2012" name="J. Immunol.">
        <title>HLA-DQA2 and HLA-DQB2 genes are specifically expressed in human Langerhans cells and encode a new HLA class II molecule.</title>
        <authorList>
            <person name="Lenormand C."/>
            <person name="Bausinger H."/>
            <person name="Gross F."/>
            <person name="Signorino-Gelo F."/>
            <person name="Koch S."/>
            <person name="Peressin M."/>
            <person name="Fricker D."/>
            <person name="Cazenave J.P."/>
            <person name="Bieber T."/>
            <person name="Hanau D."/>
            <person name="de la Salle H."/>
            <person name="Tourne S."/>
        </authorList>
    </citation>
    <scope>FUNCTION</scope>
    <scope>INTERACTION WITH CD74; HLA-DMA; HLA-DQA1 AND HLA-DQA2</scope>
    <scope>VARIANTS GLN-161; GLY-232 AND VAL-234</scope>
    <scope>SUBCELLULAR LOCATION</scope>
    <scope>TISSUE SPECIFICITY</scope>
</reference>
<name>DQB2_HUMAN</name>
<gene>
    <name type="primary">HLA-DQB2</name>
    <name type="synonym">HLA-DXB</name>
</gene>
<proteinExistence type="evidence at protein level"/>